<reference key="1">
    <citation type="submission" date="2008-04" db="EMBL/GenBank/DDBJ databases">
        <title>Complete sequence of Clostridium botulinum strain Eklund.</title>
        <authorList>
            <person name="Brinkac L.M."/>
            <person name="Brown J.L."/>
            <person name="Bruce D."/>
            <person name="Detter C."/>
            <person name="Munk C."/>
            <person name="Smith L.A."/>
            <person name="Smith T.J."/>
            <person name="Sutton G."/>
            <person name="Brettin T.S."/>
        </authorList>
    </citation>
    <scope>NUCLEOTIDE SEQUENCE [LARGE SCALE GENOMIC DNA]</scope>
    <source>
        <strain>Eklund 17B / Type B</strain>
    </source>
</reference>
<comment type="catalytic activity">
    <reaction evidence="1">
        <text>(6R)-10-formyltetrahydrofolate + 5-amino-1-(5-phospho-beta-D-ribosyl)imidazole-4-carboxamide = 5-formamido-1-(5-phospho-D-ribosyl)imidazole-4-carboxamide + (6S)-5,6,7,8-tetrahydrofolate</text>
        <dbReference type="Rhea" id="RHEA:22192"/>
        <dbReference type="ChEBI" id="CHEBI:57453"/>
        <dbReference type="ChEBI" id="CHEBI:58467"/>
        <dbReference type="ChEBI" id="CHEBI:58475"/>
        <dbReference type="ChEBI" id="CHEBI:195366"/>
        <dbReference type="EC" id="2.1.2.3"/>
    </reaction>
</comment>
<comment type="catalytic activity">
    <reaction evidence="1">
        <text>IMP + H2O = 5-formamido-1-(5-phospho-D-ribosyl)imidazole-4-carboxamide</text>
        <dbReference type="Rhea" id="RHEA:18445"/>
        <dbReference type="ChEBI" id="CHEBI:15377"/>
        <dbReference type="ChEBI" id="CHEBI:58053"/>
        <dbReference type="ChEBI" id="CHEBI:58467"/>
        <dbReference type="EC" id="3.5.4.10"/>
    </reaction>
</comment>
<comment type="pathway">
    <text evidence="1">Purine metabolism; IMP biosynthesis via de novo pathway; 5-formamido-1-(5-phospho-D-ribosyl)imidazole-4-carboxamide from 5-amino-1-(5-phospho-D-ribosyl)imidazole-4-carboxamide (10-formyl THF route): step 1/1.</text>
</comment>
<comment type="pathway">
    <text evidence="1">Purine metabolism; IMP biosynthesis via de novo pathway; IMP from 5-formamido-1-(5-phospho-D-ribosyl)imidazole-4-carboxamide: step 1/1.</text>
</comment>
<comment type="domain">
    <text evidence="1">The IMP cyclohydrolase activity resides in the N-terminal region.</text>
</comment>
<comment type="similarity">
    <text evidence="1">Belongs to the PurH family.</text>
</comment>
<protein>
    <recommendedName>
        <fullName evidence="1">Bifunctional purine biosynthesis protein PurH</fullName>
    </recommendedName>
    <domain>
        <recommendedName>
            <fullName evidence="1">Phosphoribosylaminoimidazolecarboxamide formyltransferase</fullName>
            <ecNumber evidence="1">2.1.2.3</ecNumber>
        </recommendedName>
        <alternativeName>
            <fullName evidence="1">AICAR transformylase</fullName>
        </alternativeName>
    </domain>
    <domain>
        <recommendedName>
            <fullName evidence="1">IMP cyclohydrolase</fullName>
            <ecNumber evidence="1">3.5.4.10</ecNumber>
        </recommendedName>
        <alternativeName>
            <fullName evidence="1">ATIC</fullName>
        </alternativeName>
        <alternativeName>
            <fullName evidence="1">IMP synthase</fullName>
        </alternativeName>
        <alternativeName>
            <fullName evidence="1">Inosinicase</fullName>
        </alternativeName>
    </domain>
</protein>
<evidence type="ECO:0000255" key="1">
    <source>
        <dbReference type="HAMAP-Rule" id="MF_00139"/>
    </source>
</evidence>
<evidence type="ECO:0000255" key="2">
    <source>
        <dbReference type="PROSITE-ProRule" id="PRU01202"/>
    </source>
</evidence>
<dbReference type="EC" id="2.1.2.3" evidence="1"/>
<dbReference type="EC" id="3.5.4.10" evidence="1"/>
<dbReference type="EMBL" id="CP001056">
    <property type="protein sequence ID" value="ACD23710.1"/>
    <property type="molecule type" value="Genomic_DNA"/>
</dbReference>
<dbReference type="SMR" id="B2TN76"/>
<dbReference type="KEGG" id="cbk:CLL_A1108"/>
<dbReference type="HOGENOM" id="CLU_016316_5_2_9"/>
<dbReference type="UniPathway" id="UPA00074">
    <property type="reaction ID" value="UER00133"/>
</dbReference>
<dbReference type="UniPathway" id="UPA00074">
    <property type="reaction ID" value="UER00135"/>
</dbReference>
<dbReference type="Proteomes" id="UP000001195">
    <property type="component" value="Chromosome"/>
</dbReference>
<dbReference type="GO" id="GO:0005829">
    <property type="term" value="C:cytosol"/>
    <property type="evidence" value="ECO:0007669"/>
    <property type="project" value="TreeGrafter"/>
</dbReference>
<dbReference type="GO" id="GO:0003937">
    <property type="term" value="F:IMP cyclohydrolase activity"/>
    <property type="evidence" value="ECO:0007669"/>
    <property type="project" value="UniProtKB-UniRule"/>
</dbReference>
<dbReference type="GO" id="GO:0004643">
    <property type="term" value="F:phosphoribosylaminoimidazolecarboxamide formyltransferase activity"/>
    <property type="evidence" value="ECO:0007669"/>
    <property type="project" value="UniProtKB-UniRule"/>
</dbReference>
<dbReference type="GO" id="GO:0006189">
    <property type="term" value="P:'de novo' IMP biosynthetic process"/>
    <property type="evidence" value="ECO:0007669"/>
    <property type="project" value="UniProtKB-UniRule"/>
</dbReference>
<dbReference type="CDD" id="cd01421">
    <property type="entry name" value="IMPCH"/>
    <property type="match status" value="1"/>
</dbReference>
<dbReference type="FunFam" id="3.40.140.20:FF:000001">
    <property type="entry name" value="Bifunctional purine biosynthesis protein PurH"/>
    <property type="match status" value="1"/>
</dbReference>
<dbReference type="FunFam" id="3.40.140.20:FF:000002">
    <property type="entry name" value="Bifunctional purine biosynthesis protein PurH"/>
    <property type="match status" value="1"/>
</dbReference>
<dbReference type="FunFam" id="3.40.50.1380:FF:000001">
    <property type="entry name" value="Bifunctional purine biosynthesis protein PurH"/>
    <property type="match status" value="1"/>
</dbReference>
<dbReference type="Gene3D" id="3.40.140.20">
    <property type="match status" value="2"/>
</dbReference>
<dbReference type="Gene3D" id="3.40.50.1380">
    <property type="entry name" value="Methylglyoxal synthase-like domain"/>
    <property type="match status" value="1"/>
</dbReference>
<dbReference type="HAMAP" id="MF_00139">
    <property type="entry name" value="PurH"/>
    <property type="match status" value="1"/>
</dbReference>
<dbReference type="InterPro" id="IPR024051">
    <property type="entry name" value="AICAR_Tfase_dup_dom_sf"/>
</dbReference>
<dbReference type="InterPro" id="IPR016193">
    <property type="entry name" value="Cytidine_deaminase-like"/>
</dbReference>
<dbReference type="InterPro" id="IPR011607">
    <property type="entry name" value="MGS-like_dom"/>
</dbReference>
<dbReference type="InterPro" id="IPR036914">
    <property type="entry name" value="MGS-like_dom_sf"/>
</dbReference>
<dbReference type="InterPro" id="IPR002695">
    <property type="entry name" value="PurH-like"/>
</dbReference>
<dbReference type="NCBIfam" id="NF002049">
    <property type="entry name" value="PRK00881.1"/>
    <property type="match status" value="1"/>
</dbReference>
<dbReference type="NCBIfam" id="TIGR00355">
    <property type="entry name" value="purH"/>
    <property type="match status" value="1"/>
</dbReference>
<dbReference type="PANTHER" id="PTHR11692:SF0">
    <property type="entry name" value="BIFUNCTIONAL PURINE BIOSYNTHESIS PROTEIN ATIC"/>
    <property type="match status" value="1"/>
</dbReference>
<dbReference type="PANTHER" id="PTHR11692">
    <property type="entry name" value="BIFUNCTIONAL PURINE BIOSYNTHESIS PROTEIN PURH"/>
    <property type="match status" value="1"/>
</dbReference>
<dbReference type="Pfam" id="PF01808">
    <property type="entry name" value="AICARFT_IMPCHas"/>
    <property type="match status" value="1"/>
</dbReference>
<dbReference type="Pfam" id="PF02142">
    <property type="entry name" value="MGS"/>
    <property type="match status" value="1"/>
</dbReference>
<dbReference type="PIRSF" id="PIRSF000414">
    <property type="entry name" value="AICARFT_IMPCHas"/>
    <property type="match status" value="1"/>
</dbReference>
<dbReference type="SMART" id="SM00798">
    <property type="entry name" value="AICARFT_IMPCHas"/>
    <property type="match status" value="1"/>
</dbReference>
<dbReference type="SMART" id="SM00851">
    <property type="entry name" value="MGS"/>
    <property type="match status" value="1"/>
</dbReference>
<dbReference type="SUPFAM" id="SSF53927">
    <property type="entry name" value="Cytidine deaminase-like"/>
    <property type="match status" value="1"/>
</dbReference>
<dbReference type="SUPFAM" id="SSF52335">
    <property type="entry name" value="Methylglyoxal synthase-like"/>
    <property type="match status" value="1"/>
</dbReference>
<dbReference type="PROSITE" id="PS51855">
    <property type="entry name" value="MGS"/>
    <property type="match status" value="1"/>
</dbReference>
<feature type="chain" id="PRO_1000096054" description="Bifunctional purine biosynthesis protein PurH">
    <location>
        <begin position="1"/>
        <end position="501"/>
    </location>
</feature>
<feature type="domain" description="MGS-like" evidence="2">
    <location>
        <begin position="1"/>
        <end position="144"/>
    </location>
</feature>
<sequence>MKKRALISVFNKDGVLDFAKFLVSKDIEIVSTGGTYKYLKENGIDVIEINEVTNFPEMLDGRVKTLHPLVHAGILAIRDNKEHMKVLEEREIHTIDYVVVNLYPFFEKVKEDLTFEEKVEFIDIGGPTMLRAAAKNFQDVVVISNINDYEVVKSEIKNDGQVSLKTKKKLSGKVFNLMSAYDGAIANFMLGDEEEYPEYLSVSYKKMQNLRYGENSHQSAAVYSSTMVDGAMNTFETLNGKELSYNNFKDVDIAWKCANEFDEPACCALKHNTPCGVATGENSYEAYMKAYEVDPTSIFGGIIGFNRKVDKKTAQEMVKIFLEVIAAPDYDEDALEVLKTKKNLRVLKFHNTPKAEKCMVTVDGAILVQDEDNKLIDEIKVVTEKKPSDEEMKDLLFGMKVVKYVKSNAIVVAHNGIALGIGGGQVNRIWPTEDALRRGKGATILASDAFFPFRDVVDKAAEGGIKAIIQPGGSMRDQESIDACNEHGIAMVFTGFRHFKH</sequence>
<gene>
    <name evidence="1" type="primary">purH</name>
    <name type="ordered locus">CLL_A1108</name>
</gene>
<proteinExistence type="inferred from homology"/>
<organism>
    <name type="scientific">Clostridium botulinum (strain Eklund 17B / Type B)</name>
    <dbReference type="NCBI Taxonomy" id="935198"/>
    <lineage>
        <taxon>Bacteria</taxon>
        <taxon>Bacillati</taxon>
        <taxon>Bacillota</taxon>
        <taxon>Clostridia</taxon>
        <taxon>Eubacteriales</taxon>
        <taxon>Clostridiaceae</taxon>
        <taxon>Clostridium</taxon>
    </lineage>
</organism>
<name>PUR9_CLOBB</name>
<keyword id="KW-0378">Hydrolase</keyword>
<keyword id="KW-0511">Multifunctional enzyme</keyword>
<keyword id="KW-0658">Purine biosynthesis</keyword>
<keyword id="KW-0808">Transferase</keyword>
<accession>B2TN76</accession>